<comment type="function">
    <text evidence="1">Catalyzes the oxidation of 5,10-methylenetetrahydrofolate to 5,10-methenyltetrahydrofolate and then the hydrolysis of 5,10-methenyltetrahydrofolate to 10-formyltetrahydrofolate.</text>
</comment>
<comment type="catalytic activity">
    <reaction evidence="1">
        <text>(6R)-5,10-methylene-5,6,7,8-tetrahydrofolate + NADP(+) = (6R)-5,10-methenyltetrahydrofolate + NADPH</text>
        <dbReference type="Rhea" id="RHEA:22812"/>
        <dbReference type="ChEBI" id="CHEBI:15636"/>
        <dbReference type="ChEBI" id="CHEBI:57455"/>
        <dbReference type="ChEBI" id="CHEBI:57783"/>
        <dbReference type="ChEBI" id="CHEBI:58349"/>
        <dbReference type="EC" id="1.5.1.5"/>
    </reaction>
</comment>
<comment type="catalytic activity">
    <reaction evidence="1">
        <text>(6R)-5,10-methenyltetrahydrofolate + H2O = (6R)-10-formyltetrahydrofolate + H(+)</text>
        <dbReference type="Rhea" id="RHEA:23700"/>
        <dbReference type="ChEBI" id="CHEBI:15377"/>
        <dbReference type="ChEBI" id="CHEBI:15378"/>
        <dbReference type="ChEBI" id="CHEBI:57455"/>
        <dbReference type="ChEBI" id="CHEBI:195366"/>
        <dbReference type="EC" id="3.5.4.9"/>
    </reaction>
</comment>
<comment type="pathway">
    <text evidence="1">One-carbon metabolism; tetrahydrofolate interconversion.</text>
</comment>
<comment type="subunit">
    <text evidence="1">Homodimer.</text>
</comment>
<comment type="similarity">
    <text evidence="1">Belongs to the tetrahydrofolate dehydrogenase/cyclohydrolase family.</text>
</comment>
<protein>
    <recommendedName>
        <fullName evidence="1">Bifunctional protein FolD</fullName>
    </recommendedName>
    <domain>
        <recommendedName>
            <fullName evidence="1">Methylenetetrahydrofolate dehydrogenase</fullName>
            <ecNumber evidence="1">1.5.1.5</ecNumber>
        </recommendedName>
    </domain>
    <domain>
        <recommendedName>
            <fullName evidence="1">Methenyltetrahydrofolate cyclohydrolase</fullName>
            <ecNumber evidence="1">3.5.4.9</ecNumber>
        </recommendedName>
    </domain>
</protein>
<proteinExistence type="inferred from homology"/>
<organism>
    <name type="scientific">Nitrobacter hamburgensis (strain DSM 10229 / NCIMB 13809 / X14)</name>
    <dbReference type="NCBI Taxonomy" id="323097"/>
    <lineage>
        <taxon>Bacteria</taxon>
        <taxon>Pseudomonadati</taxon>
        <taxon>Pseudomonadota</taxon>
        <taxon>Alphaproteobacteria</taxon>
        <taxon>Hyphomicrobiales</taxon>
        <taxon>Nitrobacteraceae</taxon>
        <taxon>Nitrobacter</taxon>
    </lineage>
</organism>
<accession>Q1QQJ9</accession>
<feature type="chain" id="PRO_0000268418" description="Bifunctional protein FolD">
    <location>
        <begin position="1"/>
        <end position="294"/>
    </location>
</feature>
<feature type="binding site" evidence="1">
    <location>
        <begin position="166"/>
        <end position="168"/>
    </location>
    <ligand>
        <name>NADP(+)</name>
        <dbReference type="ChEBI" id="CHEBI:58349"/>
    </ligand>
</feature>
<feature type="binding site" evidence="1">
    <location>
        <position position="191"/>
    </location>
    <ligand>
        <name>NADP(+)</name>
        <dbReference type="ChEBI" id="CHEBI:58349"/>
    </ligand>
</feature>
<feature type="binding site" evidence="1">
    <location>
        <position position="232"/>
    </location>
    <ligand>
        <name>NADP(+)</name>
        <dbReference type="ChEBI" id="CHEBI:58349"/>
    </ligand>
</feature>
<sequence>MTASIIDGKVIAADLRARVAFEVARVKRDHGLTPGLAVVLVGSDPASEVYVRSKHKQTQAAGMASFEHVLPADVAQPDLLALVARLNADPAVHGILVQLPLPKGLDTETIVAAIDPAKDVDGLHPHNAGRLAGGLPALSPCTPLGCIILTKSVHSSLEGMDAIVIGRSNLVGRPLVQLLLNENATVTIAHSRSRNLPELCRRADLVYAAVGKAEMVRGDWLKPGATVIDVGITRRPAADGKTRLIGDVAFDEAMEVAGAVTPVPGGVGQMTVACLLVNTLRAACAIKGLPAPGV</sequence>
<keyword id="KW-0028">Amino-acid biosynthesis</keyword>
<keyword id="KW-0368">Histidine biosynthesis</keyword>
<keyword id="KW-0378">Hydrolase</keyword>
<keyword id="KW-0486">Methionine biosynthesis</keyword>
<keyword id="KW-0511">Multifunctional enzyme</keyword>
<keyword id="KW-0521">NADP</keyword>
<keyword id="KW-0554">One-carbon metabolism</keyword>
<keyword id="KW-0560">Oxidoreductase</keyword>
<keyword id="KW-0658">Purine biosynthesis</keyword>
<keyword id="KW-1185">Reference proteome</keyword>
<evidence type="ECO:0000255" key="1">
    <source>
        <dbReference type="HAMAP-Rule" id="MF_01576"/>
    </source>
</evidence>
<dbReference type="EC" id="1.5.1.5" evidence="1"/>
<dbReference type="EC" id="3.5.4.9" evidence="1"/>
<dbReference type="EMBL" id="CP000319">
    <property type="protein sequence ID" value="ABE61498.1"/>
    <property type="molecule type" value="Genomic_DNA"/>
</dbReference>
<dbReference type="RefSeq" id="WP_011509202.1">
    <property type="nucleotide sequence ID" value="NC_007964.1"/>
</dbReference>
<dbReference type="SMR" id="Q1QQJ9"/>
<dbReference type="STRING" id="323097.Nham_0609"/>
<dbReference type="KEGG" id="nha:Nham_0609"/>
<dbReference type="eggNOG" id="COG0190">
    <property type="taxonomic scope" value="Bacteria"/>
</dbReference>
<dbReference type="HOGENOM" id="CLU_034045_2_1_5"/>
<dbReference type="OrthoDB" id="9803580at2"/>
<dbReference type="UniPathway" id="UPA00193"/>
<dbReference type="Proteomes" id="UP000001953">
    <property type="component" value="Chromosome"/>
</dbReference>
<dbReference type="GO" id="GO:0005829">
    <property type="term" value="C:cytosol"/>
    <property type="evidence" value="ECO:0007669"/>
    <property type="project" value="TreeGrafter"/>
</dbReference>
<dbReference type="GO" id="GO:0004477">
    <property type="term" value="F:methenyltetrahydrofolate cyclohydrolase activity"/>
    <property type="evidence" value="ECO:0007669"/>
    <property type="project" value="UniProtKB-UniRule"/>
</dbReference>
<dbReference type="GO" id="GO:0004488">
    <property type="term" value="F:methylenetetrahydrofolate dehydrogenase (NADP+) activity"/>
    <property type="evidence" value="ECO:0007669"/>
    <property type="project" value="UniProtKB-UniRule"/>
</dbReference>
<dbReference type="GO" id="GO:0000105">
    <property type="term" value="P:L-histidine biosynthetic process"/>
    <property type="evidence" value="ECO:0007669"/>
    <property type="project" value="UniProtKB-KW"/>
</dbReference>
<dbReference type="GO" id="GO:0009086">
    <property type="term" value="P:methionine biosynthetic process"/>
    <property type="evidence" value="ECO:0007669"/>
    <property type="project" value="UniProtKB-KW"/>
</dbReference>
<dbReference type="GO" id="GO:0006164">
    <property type="term" value="P:purine nucleotide biosynthetic process"/>
    <property type="evidence" value="ECO:0007669"/>
    <property type="project" value="UniProtKB-KW"/>
</dbReference>
<dbReference type="GO" id="GO:0035999">
    <property type="term" value="P:tetrahydrofolate interconversion"/>
    <property type="evidence" value="ECO:0007669"/>
    <property type="project" value="UniProtKB-UniRule"/>
</dbReference>
<dbReference type="CDD" id="cd01080">
    <property type="entry name" value="NAD_bind_m-THF_DH_Cyclohyd"/>
    <property type="match status" value="1"/>
</dbReference>
<dbReference type="FunFam" id="3.40.50.720:FF:000006">
    <property type="entry name" value="Bifunctional protein FolD"/>
    <property type="match status" value="1"/>
</dbReference>
<dbReference type="FunFam" id="3.40.50.10860:FF:000005">
    <property type="entry name" value="C-1-tetrahydrofolate synthase, cytoplasmic, putative"/>
    <property type="match status" value="1"/>
</dbReference>
<dbReference type="Gene3D" id="3.40.50.10860">
    <property type="entry name" value="Leucine Dehydrogenase, chain A, domain 1"/>
    <property type="match status" value="1"/>
</dbReference>
<dbReference type="Gene3D" id="3.40.50.720">
    <property type="entry name" value="NAD(P)-binding Rossmann-like Domain"/>
    <property type="match status" value="1"/>
</dbReference>
<dbReference type="HAMAP" id="MF_01576">
    <property type="entry name" value="THF_DHG_CYH"/>
    <property type="match status" value="1"/>
</dbReference>
<dbReference type="InterPro" id="IPR046346">
    <property type="entry name" value="Aminoacid_DH-like_N_sf"/>
</dbReference>
<dbReference type="InterPro" id="IPR036291">
    <property type="entry name" value="NAD(P)-bd_dom_sf"/>
</dbReference>
<dbReference type="InterPro" id="IPR000672">
    <property type="entry name" value="THF_DH/CycHdrlase"/>
</dbReference>
<dbReference type="InterPro" id="IPR020630">
    <property type="entry name" value="THF_DH/CycHdrlase_cat_dom"/>
</dbReference>
<dbReference type="InterPro" id="IPR020867">
    <property type="entry name" value="THF_DH/CycHdrlase_CS"/>
</dbReference>
<dbReference type="InterPro" id="IPR020631">
    <property type="entry name" value="THF_DH/CycHdrlase_NAD-bd_dom"/>
</dbReference>
<dbReference type="NCBIfam" id="NF010785">
    <property type="entry name" value="PRK14188.1"/>
    <property type="match status" value="1"/>
</dbReference>
<dbReference type="PANTHER" id="PTHR48099:SF5">
    <property type="entry name" value="C-1-TETRAHYDROFOLATE SYNTHASE, CYTOPLASMIC"/>
    <property type="match status" value="1"/>
</dbReference>
<dbReference type="PANTHER" id="PTHR48099">
    <property type="entry name" value="C-1-TETRAHYDROFOLATE SYNTHASE, CYTOPLASMIC-RELATED"/>
    <property type="match status" value="1"/>
</dbReference>
<dbReference type="Pfam" id="PF00763">
    <property type="entry name" value="THF_DHG_CYH"/>
    <property type="match status" value="1"/>
</dbReference>
<dbReference type="Pfam" id="PF02882">
    <property type="entry name" value="THF_DHG_CYH_C"/>
    <property type="match status" value="1"/>
</dbReference>
<dbReference type="PRINTS" id="PR00085">
    <property type="entry name" value="THFDHDRGNASE"/>
</dbReference>
<dbReference type="SUPFAM" id="SSF53223">
    <property type="entry name" value="Aminoacid dehydrogenase-like, N-terminal domain"/>
    <property type="match status" value="1"/>
</dbReference>
<dbReference type="SUPFAM" id="SSF51735">
    <property type="entry name" value="NAD(P)-binding Rossmann-fold domains"/>
    <property type="match status" value="1"/>
</dbReference>
<dbReference type="PROSITE" id="PS00766">
    <property type="entry name" value="THF_DHG_CYH_1"/>
    <property type="match status" value="1"/>
</dbReference>
<name>FOLD_NITHX</name>
<gene>
    <name evidence="1" type="primary">folD</name>
    <name type="ordered locus">Nham_0609</name>
</gene>
<reference key="1">
    <citation type="submission" date="2006-03" db="EMBL/GenBank/DDBJ databases">
        <title>Complete sequence of chromosome of Nitrobacter hamburgensis X14.</title>
        <authorList>
            <consortium name="US DOE Joint Genome Institute"/>
            <person name="Copeland A."/>
            <person name="Lucas S."/>
            <person name="Lapidus A."/>
            <person name="Barry K."/>
            <person name="Detter J.C."/>
            <person name="Glavina del Rio T."/>
            <person name="Hammon N."/>
            <person name="Israni S."/>
            <person name="Dalin E."/>
            <person name="Tice H."/>
            <person name="Pitluck S."/>
            <person name="Chain P."/>
            <person name="Malfatti S."/>
            <person name="Shin M."/>
            <person name="Vergez L."/>
            <person name="Schmutz J."/>
            <person name="Larimer F."/>
            <person name="Land M."/>
            <person name="Hauser L."/>
            <person name="Kyrpides N."/>
            <person name="Ivanova N."/>
            <person name="Ward B."/>
            <person name="Arp D."/>
            <person name="Klotz M."/>
            <person name="Stein L."/>
            <person name="O'Mullan G."/>
            <person name="Starkenburg S."/>
            <person name="Sayavedra L."/>
            <person name="Poret-Peterson A.T."/>
            <person name="Gentry M.E."/>
            <person name="Bruce D."/>
            <person name="Richardson P."/>
        </authorList>
    </citation>
    <scope>NUCLEOTIDE SEQUENCE [LARGE SCALE GENOMIC DNA]</scope>
    <source>
        <strain>DSM 10229 / NCIMB 13809 / X14</strain>
    </source>
</reference>